<gene>
    <name evidence="1" type="primary">atpH</name>
    <name type="ordered locus">VP3072</name>
</gene>
<feature type="chain" id="PRO_1000184829" description="ATP synthase subunit delta">
    <location>
        <begin position="1"/>
        <end position="177"/>
    </location>
</feature>
<evidence type="ECO:0000255" key="1">
    <source>
        <dbReference type="HAMAP-Rule" id="MF_01416"/>
    </source>
</evidence>
<accession>Q87KA5</accession>
<reference key="1">
    <citation type="journal article" date="2003" name="Lancet">
        <title>Genome sequence of Vibrio parahaemolyticus: a pathogenic mechanism distinct from that of V. cholerae.</title>
        <authorList>
            <person name="Makino K."/>
            <person name="Oshima K."/>
            <person name="Kurokawa K."/>
            <person name="Yokoyama K."/>
            <person name="Uda T."/>
            <person name="Tagomori K."/>
            <person name="Iijima Y."/>
            <person name="Najima M."/>
            <person name="Nakano M."/>
            <person name="Yamashita A."/>
            <person name="Kubota Y."/>
            <person name="Kimura S."/>
            <person name="Yasunaga T."/>
            <person name="Honda T."/>
            <person name="Shinagawa H."/>
            <person name="Hattori M."/>
            <person name="Iida T."/>
        </authorList>
    </citation>
    <scope>NUCLEOTIDE SEQUENCE [LARGE SCALE GENOMIC DNA]</scope>
    <source>
        <strain>RIMD 2210633</strain>
    </source>
</reference>
<keyword id="KW-0066">ATP synthesis</keyword>
<keyword id="KW-0997">Cell inner membrane</keyword>
<keyword id="KW-1003">Cell membrane</keyword>
<keyword id="KW-0139">CF(1)</keyword>
<keyword id="KW-0375">Hydrogen ion transport</keyword>
<keyword id="KW-0406">Ion transport</keyword>
<keyword id="KW-0472">Membrane</keyword>
<keyword id="KW-0813">Transport</keyword>
<name>ATPD_VIBPA</name>
<protein>
    <recommendedName>
        <fullName evidence="1">ATP synthase subunit delta</fullName>
    </recommendedName>
    <alternativeName>
        <fullName evidence="1">ATP synthase F(1) sector subunit delta</fullName>
    </alternativeName>
    <alternativeName>
        <fullName evidence="1">F-type ATPase subunit delta</fullName>
        <shortName evidence="1">F-ATPase subunit delta</shortName>
    </alternativeName>
</protein>
<proteinExistence type="inferred from homology"/>
<sequence>MSDLTTIARPYAKAAFDFAVDKGQLDQWGQMLSFAAEVAKNEQMNELLTSSFSAEKMAEIFVAVCGEQVDAHGQNLLKVMAENGRLAALPDVCEQFFILKKEHEKEIDVEVISASELSDEQLANIGSKLEARLERKVKLNCSVDETLLGGVIIRAGDLVIDDSARGRLNRLSDALQS</sequence>
<comment type="function">
    <text evidence="1">F(1)F(0) ATP synthase produces ATP from ADP in the presence of a proton or sodium gradient. F-type ATPases consist of two structural domains, F(1) containing the extramembraneous catalytic core and F(0) containing the membrane proton channel, linked together by a central stalk and a peripheral stalk. During catalysis, ATP synthesis in the catalytic domain of F(1) is coupled via a rotary mechanism of the central stalk subunits to proton translocation.</text>
</comment>
<comment type="function">
    <text evidence="1">This protein is part of the stalk that links CF(0) to CF(1). It either transmits conformational changes from CF(0) to CF(1) or is implicated in proton conduction.</text>
</comment>
<comment type="subunit">
    <text evidence="1">F-type ATPases have 2 components, F(1) - the catalytic core - and F(0) - the membrane proton channel. F(1) has five subunits: alpha(3), beta(3), gamma(1), delta(1), epsilon(1). F(0) has three main subunits: a(1), b(2) and c(10-14). The alpha and beta chains form an alternating ring which encloses part of the gamma chain. F(1) is attached to F(0) by a central stalk formed by the gamma and epsilon chains, while a peripheral stalk is formed by the delta and b chains.</text>
</comment>
<comment type="subcellular location">
    <subcellularLocation>
        <location evidence="1">Cell inner membrane</location>
        <topology evidence="1">Peripheral membrane protein</topology>
    </subcellularLocation>
</comment>
<comment type="similarity">
    <text evidence="1">Belongs to the ATPase delta chain family.</text>
</comment>
<dbReference type="EMBL" id="BA000031">
    <property type="protein sequence ID" value="BAC61335.1"/>
    <property type="molecule type" value="Genomic_DNA"/>
</dbReference>
<dbReference type="RefSeq" id="NP_799451.1">
    <property type="nucleotide sequence ID" value="NC_004603.1"/>
</dbReference>
<dbReference type="RefSeq" id="WP_005481164.1">
    <property type="nucleotide sequence ID" value="NC_004603.1"/>
</dbReference>
<dbReference type="SMR" id="Q87KA5"/>
<dbReference type="GeneID" id="1190671"/>
<dbReference type="KEGG" id="vpa:VP3072"/>
<dbReference type="PATRIC" id="fig|223926.6.peg.2958"/>
<dbReference type="eggNOG" id="COG0712">
    <property type="taxonomic scope" value="Bacteria"/>
</dbReference>
<dbReference type="HOGENOM" id="CLU_085114_3_0_6"/>
<dbReference type="Proteomes" id="UP000002493">
    <property type="component" value="Chromosome 1"/>
</dbReference>
<dbReference type="GO" id="GO:0005886">
    <property type="term" value="C:plasma membrane"/>
    <property type="evidence" value="ECO:0007669"/>
    <property type="project" value="UniProtKB-SubCell"/>
</dbReference>
<dbReference type="GO" id="GO:0045259">
    <property type="term" value="C:proton-transporting ATP synthase complex"/>
    <property type="evidence" value="ECO:0007669"/>
    <property type="project" value="UniProtKB-KW"/>
</dbReference>
<dbReference type="GO" id="GO:0046933">
    <property type="term" value="F:proton-transporting ATP synthase activity, rotational mechanism"/>
    <property type="evidence" value="ECO:0007669"/>
    <property type="project" value="UniProtKB-UniRule"/>
</dbReference>
<dbReference type="Gene3D" id="1.10.520.20">
    <property type="entry name" value="N-terminal domain of the delta subunit of the F1F0-ATP synthase"/>
    <property type="match status" value="1"/>
</dbReference>
<dbReference type="HAMAP" id="MF_01416">
    <property type="entry name" value="ATP_synth_delta_bact"/>
    <property type="match status" value="1"/>
</dbReference>
<dbReference type="InterPro" id="IPR026015">
    <property type="entry name" value="ATP_synth_OSCP/delta_N_sf"/>
</dbReference>
<dbReference type="InterPro" id="IPR020781">
    <property type="entry name" value="ATPase_OSCP/d_CS"/>
</dbReference>
<dbReference type="InterPro" id="IPR000711">
    <property type="entry name" value="ATPase_OSCP/dsu"/>
</dbReference>
<dbReference type="NCBIfam" id="TIGR01145">
    <property type="entry name" value="ATP_synt_delta"/>
    <property type="match status" value="1"/>
</dbReference>
<dbReference type="NCBIfam" id="NF004402">
    <property type="entry name" value="PRK05758.2-2"/>
    <property type="match status" value="1"/>
</dbReference>
<dbReference type="NCBIfam" id="NF004404">
    <property type="entry name" value="PRK05758.2-5"/>
    <property type="match status" value="1"/>
</dbReference>
<dbReference type="PANTHER" id="PTHR11910">
    <property type="entry name" value="ATP SYNTHASE DELTA CHAIN"/>
    <property type="match status" value="1"/>
</dbReference>
<dbReference type="Pfam" id="PF00213">
    <property type="entry name" value="OSCP"/>
    <property type="match status" value="1"/>
</dbReference>
<dbReference type="PRINTS" id="PR00125">
    <property type="entry name" value="ATPASEDELTA"/>
</dbReference>
<dbReference type="SUPFAM" id="SSF47928">
    <property type="entry name" value="N-terminal domain of the delta subunit of the F1F0-ATP synthase"/>
    <property type="match status" value="1"/>
</dbReference>
<dbReference type="PROSITE" id="PS00389">
    <property type="entry name" value="ATPASE_DELTA"/>
    <property type="match status" value="1"/>
</dbReference>
<organism>
    <name type="scientific">Vibrio parahaemolyticus serotype O3:K6 (strain RIMD 2210633)</name>
    <dbReference type="NCBI Taxonomy" id="223926"/>
    <lineage>
        <taxon>Bacteria</taxon>
        <taxon>Pseudomonadati</taxon>
        <taxon>Pseudomonadota</taxon>
        <taxon>Gammaproteobacteria</taxon>
        <taxon>Vibrionales</taxon>
        <taxon>Vibrionaceae</taxon>
        <taxon>Vibrio</taxon>
    </lineage>
</organism>